<name>RL14_RALN1</name>
<dbReference type="EMBL" id="AL646052">
    <property type="protein sequence ID" value="CAD16718.1"/>
    <property type="molecule type" value="Genomic_DNA"/>
</dbReference>
<dbReference type="RefSeq" id="WP_003264129.1">
    <property type="nucleotide sequence ID" value="NC_003295.1"/>
</dbReference>
<dbReference type="SMR" id="Q8XV22"/>
<dbReference type="STRING" id="267608.RSc3009"/>
<dbReference type="EnsemblBacteria" id="CAD16718">
    <property type="protein sequence ID" value="CAD16718"/>
    <property type="gene ID" value="RSc3009"/>
</dbReference>
<dbReference type="GeneID" id="97319858"/>
<dbReference type="KEGG" id="rso:RSc3009"/>
<dbReference type="eggNOG" id="COG0093">
    <property type="taxonomic scope" value="Bacteria"/>
</dbReference>
<dbReference type="HOGENOM" id="CLU_095071_2_1_4"/>
<dbReference type="Proteomes" id="UP000001436">
    <property type="component" value="Chromosome"/>
</dbReference>
<dbReference type="GO" id="GO:0022625">
    <property type="term" value="C:cytosolic large ribosomal subunit"/>
    <property type="evidence" value="ECO:0007669"/>
    <property type="project" value="TreeGrafter"/>
</dbReference>
<dbReference type="GO" id="GO:0070180">
    <property type="term" value="F:large ribosomal subunit rRNA binding"/>
    <property type="evidence" value="ECO:0007669"/>
    <property type="project" value="TreeGrafter"/>
</dbReference>
<dbReference type="GO" id="GO:0003735">
    <property type="term" value="F:structural constituent of ribosome"/>
    <property type="evidence" value="ECO:0007669"/>
    <property type="project" value="InterPro"/>
</dbReference>
<dbReference type="GO" id="GO:0006412">
    <property type="term" value="P:translation"/>
    <property type="evidence" value="ECO:0007669"/>
    <property type="project" value="UniProtKB-UniRule"/>
</dbReference>
<dbReference type="CDD" id="cd00337">
    <property type="entry name" value="Ribosomal_uL14"/>
    <property type="match status" value="1"/>
</dbReference>
<dbReference type="FunFam" id="2.40.150.20:FF:000001">
    <property type="entry name" value="50S ribosomal protein L14"/>
    <property type="match status" value="1"/>
</dbReference>
<dbReference type="Gene3D" id="2.40.150.20">
    <property type="entry name" value="Ribosomal protein L14"/>
    <property type="match status" value="1"/>
</dbReference>
<dbReference type="HAMAP" id="MF_01367">
    <property type="entry name" value="Ribosomal_uL14"/>
    <property type="match status" value="1"/>
</dbReference>
<dbReference type="InterPro" id="IPR000218">
    <property type="entry name" value="Ribosomal_uL14"/>
</dbReference>
<dbReference type="InterPro" id="IPR005745">
    <property type="entry name" value="Ribosomal_uL14_bac-type"/>
</dbReference>
<dbReference type="InterPro" id="IPR019972">
    <property type="entry name" value="Ribosomal_uL14_CS"/>
</dbReference>
<dbReference type="InterPro" id="IPR036853">
    <property type="entry name" value="Ribosomal_uL14_sf"/>
</dbReference>
<dbReference type="NCBIfam" id="TIGR01067">
    <property type="entry name" value="rplN_bact"/>
    <property type="match status" value="1"/>
</dbReference>
<dbReference type="PANTHER" id="PTHR11761">
    <property type="entry name" value="50S/60S RIBOSOMAL PROTEIN L14/L23"/>
    <property type="match status" value="1"/>
</dbReference>
<dbReference type="PANTHER" id="PTHR11761:SF3">
    <property type="entry name" value="LARGE RIBOSOMAL SUBUNIT PROTEIN UL14M"/>
    <property type="match status" value="1"/>
</dbReference>
<dbReference type="Pfam" id="PF00238">
    <property type="entry name" value="Ribosomal_L14"/>
    <property type="match status" value="1"/>
</dbReference>
<dbReference type="SMART" id="SM01374">
    <property type="entry name" value="Ribosomal_L14"/>
    <property type="match status" value="1"/>
</dbReference>
<dbReference type="SUPFAM" id="SSF50193">
    <property type="entry name" value="Ribosomal protein L14"/>
    <property type="match status" value="1"/>
</dbReference>
<dbReference type="PROSITE" id="PS00049">
    <property type="entry name" value="RIBOSOMAL_L14"/>
    <property type="match status" value="1"/>
</dbReference>
<gene>
    <name evidence="1" type="primary">rplN</name>
    <name type="ordered locus">RSc3009</name>
</gene>
<evidence type="ECO:0000255" key="1">
    <source>
        <dbReference type="HAMAP-Rule" id="MF_01367"/>
    </source>
</evidence>
<evidence type="ECO:0000305" key="2"/>
<keyword id="KW-1185">Reference proteome</keyword>
<keyword id="KW-0687">Ribonucleoprotein</keyword>
<keyword id="KW-0689">Ribosomal protein</keyword>
<keyword id="KW-0694">RNA-binding</keyword>
<keyword id="KW-0699">rRNA-binding</keyword>
<proteinExistence type="inferred from homology"/>
<protein>
    <recommendedName>
        <fullName evidence="1">Large ribosomal subunit protein uL14</fullName>
    </recommendedName>
    <alternativeName>
        <fullName evidence="2">50S ribosomal protein L14</fullName>
    </alternativeName>
</protein>
<organism>
    <name type="scientific">Ralstonia nicotianae (strain ATCC BAA-1114 / GMI1000)</name>
    <name type="common">Ralstonia solanacearum</name>
    <dbReference type="NCBI Taxonomy" id="267608"/>
    <lineage>
        <taxon>Bacteria</taxon>
        <taxon>Pseudomonadati</taxon>
        <taxon>Pseudomonadota</taxon>
        <taxon>Betaproteobacteria</taxon>
        <taxon>Burkholderiales</taxon>
        <taxon>Burkholderiaceae</taxon>
        <taxon>Ralstonia</taxon>
        <taxon>Ralstonia solanacearum species complex</taxon>
    </lineage>
</organism>
<accession>Q8XV22</accession>
<sequence length="122" mass="13352">MIQTESRLEVADNTGAREVMCIKVLGGSKRRYASVGDIIKVSVKDAAPRGRVKKGDIYNAVVVRTAKGVRRPDGSLIKFDGNAAVLLNTKLEPIGTRIFGPVTRELRTERFMKIVSLAPEVL</sequence>
<reference key="1">
    <citation type="journal article" date="2002" name="Nature">
        <title>Genome sequence of the plant pathogen Ralstonia solanacearum.</title>
        <authorList>
            <person name="Salanoubat M."/>
            <person name="Genin S."/>
            <person name="Artiguenave F."/>
            <person name="Gouzy J."/>
            <person name="Mangenot S."/>
            <person name="Arlat M."/>
            <person name="Billault A."/>
            <person name="Brottier P."/>
            <person name="Camus J.-C."/>
            <person name="Cattolico L."/>
            <person name="Chandler M."/>
            <person name="Choisne N."/>
            <person name="Claudel-Renard C."/>
            <person name="Cunnac S."/>
            <person name="Demange N."/>
            <person name="Gaspin C."/>
            <person name="Lavie M."/>
            <person name="Moisan A."/>
            <person name="Robert C."/>
            <person name="Saurin W."/>
            <person name="Schiex T."/>
            <person name="Siguier P."/>
            <person name="Thebault P."/>
            <person name="Whalen M."/>
            <person name="Wincker P."/>
            <person name="Levy M."/>
            <person name="Weissenbach J."/>
            <person name="Boucher C.A."/>
        </authorList>
    </citation>
    <scope>NUCLEOTIDE SEQUENCE [LARGE SCALE GENOMIC DNA]</scope>
    <source>
        <strain>ATCC BAA-1114 / GMI1000</strain>
    </source>
</reference>
<comment type="function">
    <text evidence="1">Binds to 23S rRNA. Forms part of two intersubunit bridges in the 70S ribosome.</text>
</comment>
<comment type="subunit">
    <text evidence="1">Part of the 50S ribosomal subunit. Forms a cluster with proteins L3 and L19. In the 70S ribosome, L14 and L19 interact and together make contacts with the 16S rRNA in bridges B5 and B8.</text>
</comment>
<comment type="similarity">
    <text evidence="1">Belongs to the universal ribosomal protein uL14 family.</text>
</comment>
<feature type="chain" id="PRO_0000266536" description="Large ribosomal subunit protein uL14">
    <location>
        <begin position="1"/>
        <end position="122"/>
    </location>
</feature>